<evidence type="ECO:0000250" key="1"/>
<evidence type="ECO:0000305" key="2"/>
<sequence>KLESIGYLYEPLSEEYRRVIDFSDMKNLRSMFNKITIHVSDKCIQVNKGYLSDFVTSLIRLSDSDINTYDSFDITYIDPRRHITWNNILSILNEK</sequence>
<reference key="1">
    <citation type="journal article" date="1991" name="Virology">
        <title>Identification and nucleotide sequence of the thymidine kinase gene of swinepox virus.</title>
        <authorList>
            <person name="Schnitzlein W.M."/>
            <person name="Tripathy D.N."/>
        </authorList>
    </citation>
    <scope>NUCLEOTIDE SEQUENCE [GENOMIC DNA]</scope>
</reference>
<dbReference type="EMBL" id="M59931">
    <property type="protein sequence ID" value="AAA47890.1"/>
    <property type="molecule type" value="Genomic_DNA"/>
</dbReference>
<dbReference type="PIR" id="A37949">
    <property type="entry name" value="A37949"/>
</dbReference>
<dbReference type="GO" id="GO:0030430">
    <property type="term" value="C:host cell cytoplasm"/>
    <property type="evidence" value="ECO:0007669"/>
    <property type="project" value="UniProtKB-SubCell"/>
</dbReference>
<dbReference type="GO" id="GO:0044423">
    <property type="term" value="C:virion component"/>
    <property type="evidence" value="ECO:0007669"/>
    <property type="project" value="UniProtKB-KW"/>
</dbReference>
<dbReference type="InterPro" id="IPR005006">
    <property type="entry name" value="Poxvirus_J1"/>
</dbReference>
<dbReference type="Pfam" id="PF03338">
    <property type="entry name" value="Pox_J1"/>
    <property type="match status" value="1"/>
</dbReference>
<organismHost>
    <name type="scientific">Sus scrofa</name>
    <name type="common">Pig</name>
    <dbReference type="NCBI Taxonomy" id="9823"/>
</organismHost>
<proteinExistence type="evidence at transcript level"/>
<comment type="function">
    <text evidence="1">Late protein which is a part of a large complex required for early virion morphogenesis. This complex participates in the formation of virosomes and the incorporation of virosomal contents into nascent immature virions. J1 protein is required for DNA packaging during immature virions (IV) formation (By similarity).</text>
</comment>
<comment type="subunit">
    <text evidence="1">Homodimer. Part of a complex composed of A30, G7, F10 kinase, A15, D2, D3, and J1. Interacts with A45 (By similarity).</text>
</comment>
<comment type="subcellular location">
    <subcellularLocation>
        <location>Virion</location>
    </subcellularLocation>
    <subcellularLocation>
        <location evidence="1">Host cytoplasm</location>
    </subcellularLocation>
    <text evidence="1">Localizes in cytoplasmic virus factories. Probably located in between the core and the virion membrane (By similarity).</text>
</comment>
<comment type="induction">
    <text>Expressed in the late phase of the viral replicative cycle.</text>
</comment>
<comment type="similarity">
    <text evidence="2">Belongs to the chordopoxvirinae J1 family.</text>
</comment>
<gene>
    <name type="ORF">SWF7</name>
</gene>
<accession>P23332</accession>
<keyword id="KW-1035">Host cytoplasm</keyword>
<keyword id="KW-0426">Late protein</keyword>
<keyword id="KW-0946">Virion</keyword>
<feature type="chain" id="PRO_0000099592" description="Protein J1 homolog">
    <location>
        <begin position="1" status="less than"/>
        <end position="95"/>
    </location>
</feature>
<feature type="non-terminal residue">
    <location>
        <position position="1"/>
    </location>
</feature>
<organism>
    <name type="scientific">Swinepox virus (strain Kasza)</name>
    <name type="common">SWPV</name>
    <dbReference type="NCBI Taxonomy" id="10277"/>
    <lineage>
        <taxon>Viruses</taxon>
        <taxon>Varidnaviria</taxon>
        <taxon>Bamfordvirae</taxon>
        <taxon>Nucleocytoviricota</taxon>
        <taxon>Pokkesviricetes</taxon>
        <taxon>Chitovirales</taxon>
        <taxon>Poxviridae</taxon>
        <taxon>Chordopoxvirinae</taxon>
        <taxon>Suipoxvirus</taxon>
        <taxon>Swinepox virus</taxon>
    </lineage>
</organism>
<protein>
    <recommendedName>
        <fullName>Protein J1 homolog</fullName>
    </recommendedName>
    <alternativeName>
        <fullName>Protein F7</fullName>
    </alternativeName>
</protein>
<name>J1_SWPVK</name>